<accession>Q7A5P1</accession>
<name>ACYP_STAAN</name>
<reference key="1">
    <citation type="journal article" date="2001" name="Lancet">
        <title>Whole genome sequencing of meticillin-resistant Staphylococcus aureus.</title>
        <authorList>
            <person name="Kuroda M."/>
            <person name="Ohta T."/>
            <person name="Uchiyama I."/>
            <person name="Baba T."/>
            <person name="Yuzawa H."/>
            <person name="Kobayashi I."/>
            <person name="Cui L."/>
            <person name="Oguchi A."/>
            <person name="Aoki K."/>
            <person name="Nagai Y."/>
            <person name="Lian J.-Q."/>
            <person name="Ito T."/>
            <person name="Kanamori M."/>
            <person name="Matsumaru H."/>
            <person name="Maruyama A."/>
            <person name="Murakami H."/>
            <person name="Hosoyama A."/>
            <person name="Mizutani-Ui Y."/>
            <person name="Takahashi N.K."/>
            <person name="Sawano T."/>
            <person name="Inoue R."/>
            <person name="Kaito C."/>
            <person name="Sekimizu K."/>
            <person name="Hirakawa H."/>
            <person name="Kuhara S."/>
            <person name="Goto S."/>
            <person name="Yabuzaki J."/>
            <person name="Kanehisa M."/>
            <person name="Yamashita A."/>
            <person name="Oshima K."/>
            <person name="Furuya K."/>
            <person name="Yoshino C."/>
            <person name="Shiba T."/>
            <person name="Hattori M."/>
            <person name="Ogasawara N."/>
            <person name="Hayashi H."/>
            <person name="Hiramatsu K."/>
        </authorList>
    </citation>
    <scope>NUCLEOTIDE SEQUENCE [LARGE SCALE GENOMIC DNA]</scope>
    <source>
        <strain>N315</strain>
    </source>
</reference>
<dbReference type="EC" id="3.6.1.7"/>
<dbReference type="EMBL" id="BA000018">
    <property type="protein sequence ID" value="BAB42496.1"/>
    <property type="molecule type" value="Genomic_DNA"/>
</dbReference>
<dbReference type="PIR" id="D89917">
    <property type="entry name" value="D89917"/>
</dbReference>
<dbReference type="RefSeq" id="WP_001215907.1">
    <property type="nucleotide sequence ID" value="NC_002745.2"/>
</dbReference>
<dbReference type="SMR" id="Q7A5P1"/>
<dbReference type="EnsemblBacteria" id="BAB42496">
    <property type="protein sequence ID" value="BAB42496"/>
    <property type="gene ID" value="BAB42496"/>
</dbReference>
<dbReference type="KEGG" id="sau:SA1236"/>
<dbReference type="HOGENOM" id="CLU_141932_2_1_9"/>
<dbReference type="GO" id="GO:0003998">
    <property type="term" value="F:acylphosphatase activity"/>
    <property type="evidence" value="ECO:0007669"/>
    <property type="project" value="UniProtKB-EC"/>
</dbReference>
<dbReference type="GO" id="GO:0016743">
    <property type="term" value="F:carboxyl- or carbamoyltransferase activity"/>
    <property type="evidence" value="ECO:0007669"/>
    <property type="project" value="TreeGrafter"/>
</dbReference>
<dbReference type="GO" id="GO:0008270">
    <property type="term" value="F:zinc ion binding"/>
    <property type="evidence" value="ECO:0007669"/>
    <property type="project" value="TreeGrafter"/>
</dbReference>
<dbReference type="GO" id="GO:0051604">
    <property type="term" value="P:protein maturation"/>
    <property type="evidence" value="ECO:0007669"/>
    <property type="project" value="TreeGrafter"/>
</dbReference>
<dbReference type="Gene3D" id="3.30.70.100">
    <property type="match status" value="1"/>
</dbReference>
<dbReference type="InterPro" id="IPR001792">
    <property type="entry name" value="Acylphosphatase-like_dom"/>
</dbReference>
<dbReference type="InterPro" id="IPR036046">
    <property type="entry name" value="Acylphosphatase-like_dom_sf"/>
</dbReference>
<dbReference type="InterPro" id="IPR017968">
    <property type="entry name" value="Acylphosphatase_CS"/>
</dbReference>
<dbReference type="InterPro" id="IPR051060">
    <property type="entry name" value="Carbamoyltrans_HypF-like"/>
</dbReference>
<dbReference type="NCBIfam" id="NF011005">
    <property type="entry name" value="PRK14431.1"/>
    <property type="match status" value="1"/>
</dbReference>
<dbReference type="PANTHER" id="PTHR42959">
    <property type="entry name" value="CARBAMOYLTRANSFERASE"/>
    <property type="match status" value="1"/>
</dbReference>
<dbReference type="PANTHER" id="PTHR42959:SF1">
    <property type="entry name" value="CARBAMOYLTRANSFERASE HYPF"/>
    <property type="match status" value="1"/>
</dbReference>
<dbReference type="Pfam" id="PF00708">
    <property type="entry name" value="Acylphosphatase"/>
    <property type="match status" value="1"/>
</dbReference>
<dbReference type="SUPFAM" id="SSF54975">
    <property type="entry name" value="Acylphosphatase/BLUF domain-like"/>
    <property type="match status" value="1"/>
</dbReference>
<dbReference type="PROSITE" id="PS00150">
    <property type="entry name" value="ACYLPHOSPHATASE_1"/>
    <property type="match status" value="1"/>
</dbReference>
<dbReference type="PROSITE" id="PS51160">
    <property type="entry name" value="ACYLPHOSPHATASE_3"/>
    <property type="match status" value="1"/>
</dbReference>
<organism>
    <name type="scientific">Staphylococcus aureus (strain N315)</name>
    <dbReference type="NCBI Taxonomy" id="158879"/>
    <lineage>
        <taxon>Bacteria</taxon>
        <taxon>Bacillati</taxon>
        <taxon>Bacillota</taxon>
        <taxon>Bacilli</taxon>
        <taxon>Bacillales</taxon>
        <taxon>Staphylococcaceae</taxon>
        <taxon>Staphylococcus</taxon>
    </lineage>
</organism>
<protein>
    <recommendedName>
        <fullName>Acylphosphatase</fullName>
        <ecNumber>3.6.1.7</ecNumber>
    </recommendedName>
    <alternativeName>
        <fullName>Acylphosphate phosphohydrolase</fullName>
    </alternativeName>
</protein>
<evidence type="ECO:0000255" key="1">
    <source>
        <dbReference type="PROSITE-ProRule" id="PRU00520"/>
    </source>
</evidence>
<evidence type="ECO:0000305" key="2"/>
<sequence>MRHIHLQVFGRVQGVGFRYFTQRIAMNYNIVGTVQNVDDYVEIYAQGDDADIERFIQGVIEGASPASNVTSHQLEELELNQKLSDFRSI</sequence>
<proteinExistence type="inferred from homology"/>
<comment type="catalytic activity">
    <reaction>
        <text>an acyl phosphate + H2O = a carboxylate + phosphate + H(+)</text>
        <dbReference type="Rhea" id="RHEA:14965"/>
        <dbReference type="ChEBI" id="CHEBI:15377"/>
        <dbReference type="ChEBI" id="CHEBI:15378"/>
        <dbReference type="ChEBI" id="CHEBI:29067"/>
        <dbReference type="ChEBI" id="CHEBI:43474"/>
        <dbReference type="ChEBI" id="CHEBI:59918"/>
        <dbReference type="EC" id="3.6.1.7"/>
    </reaction>
</comment>
<comment type="similarity">
    <text evidence="2">Belongs to the acylphosphatase family.</text>
</comment>
<keyword id="KW-0378">Hydrolase</keyword>
<feature type="chain" id="PRO_0000326815" description="Acylphosphatase">
    <location>
        <begin position="1"/>
        <end position="89"/>
    </location>
</feature>
<feature type="domain" description="Acylphosphatase-like" evidence="1">
    <location>
        <begin position="3"/>
        <end position="89"/>
    </location>
</feature>
<feature type="active site" evidence="1">
    <location>
        <position position="18"/>
    </location>
</feature>
<feature type="active site" evidence="1">
    <location>
        <position position="36"/>
    </location>
</feature>
<gene>
    <name type="primary">acyP</name>
    <name type="ordered locus">SA1236</name>
</gene>